<protein>
    <recommendedName>
        <fullName evidence="1">HTH-type transcriptional repressor PurR</fullName>
    </recommendedName>
    <alternativeName>
        <fullName evidence="1">Pur regulon repressor</fullName>
    </alternativeName>
    <alternativeName>
        <fullName evidence="1">Purine nucleotide synthesis repressor</fullName>
    </alternativeName>
</protein>
<gene>
    <name evidence="1" type="primary">purR</name>
    <name type="ordered locus">SCH_1449</name>
</gene>
<name>PURR_SALCH</name>
<sequence>MATIKDVAKRANVSTTTVSHVINKTRFVAEETRNAVWAAIKELHYSPSAVARSLKVNHTKSIGLLATSSEAAYFAEIIEAVEKNCFQKGYTLILGNAWNNLEKQRAYLSMMAQKRVDGLLVMCSEYPEPLLSMLEEYRHIPMVVMDWGEAKADFTDTVIDNAFAGGYMAGRYLVERGHRDIGVIPGPLERNTGAGRLAGFMKAMEEALINVPDNWIVQGDFEPESGYHAMQQILSQSHRPTAVFCGGDIMAMGALCAADEMGLRVPQDVSVIGYDNVRNARYFTPALTTIHQPKDSLGETAFNMLLDRIVNKREESQSIEVHPRLVERRSVADGPFRDYRR</sequence>
<organism>
    <name type="scientific">Salmonella choleraesuis (strain SC-B67)</name>
    <dbReference type="NCBI Taxonomy" id="321314"/>
    <lineage>
        <taxon>Bacteria</taxon>
        <taxon>Pseudomonadati</taxon>
        <taxon>Pseudomonadota</taxon>
        <taxon>Gammaproteobacteria</taxon>
        <taxon>Enterobacterales</taxon>
        <taxon>Enterobacteriaceae</taxon>
        <taxon>Salmonella</taxon>
    </lineage>
</organism>
<reference key="1">
    <citation type="journal article" date="2005" name="Nucleic Acids Res.">
        <title>The genome sequence of Salmonella enterica serovar Choleraesuis, a highly invasive and resistant zoonotic pathogen.</title>
        <authorList>
            <person name="Chiu C.-H."/>
            <person name="Tang P."/>
            <person name="Chu C."/>
            <person name="Hu S."/>
            <person name="Bao Q."/>
            <person name="Yu J."/>
            <person name="Chou Y.-Y."/>
            <person name="Wang H.-S."/>
            <person name="Lee Y.-S."/>
        </authorList>
    </citation>
    <scope>NUCLEOTIDE SEQUENCE [LARGE SCALE GENOMIC DNA]</scope>
    <source>
        <strain>SC-B67</strain>
    </source>
</reference>
<proteinExistence type="inferred from homology"/>
<keyword id="KW-0238">DNA-binding</keyword>
<keyword id="KW-0658">Purine biosynthesis</keyword>
<keyword id="KW-0678">Repressor</keyword>
<keyword id="KW-0804">Transcription</keyword>
<keyword id="KW-0805">Transcription regulation</keyword>
<feature type="chain" id="PRO_0000279665" description="HTH-type transcriptional repressor PurR">
    <location>
        <begin position="1"/>
        <end position="341"/>
    </location>
</feature>
<feature type="domain" description="HTH lacI-type" evidence="1">
    <location>
        <begin position="2"/>
        <end position="56"/>
    </location>
</feature>
<feature type="DNA-binding region" description="H-T-H motif" evidence="1">
    <location>
        <begin position="4"/>
        <end position="23"/>
    </location>
</feature>
<feature type="DNA-binding region" evidence="1">
    <location>
        <begin position="48"/>
        <end position="56"/>
    </location>
</feature>
<feature type="binding site" evidence="1">
    <location>
        <position position="73"/>
    </location>
    <ligand>
        <name>hypoxanthine</name>
        <dbReference type="ChEBI" id="CHEBI:17368"/>
    </ligand>
</feature>
<feature type="binding site" evidence="1">
    <location>
        <position position="190"/>
    </location>
    <ligand>
        <name>hypoxanthine</name>
        <dbReference type="ChEBI" id="CHEBI:17368"/>
    </ligand>
</feature>
<feature type="binding site" evidence="1">
    <location>
        <position position="192"/>
    </location>
    <ligand>
        <name>hypoxanthine</name>
        <dbReference type="ChEBI" id="CHEBI:17368"/>
    </ligand>
</feature>
<feature type="binding site" evidence="1">
    <location>
        <position position="221"/>
    </location>
    <ligand>
        <name>hypoxanthine</name>
        <dbReference type="ChEBI" id="CHEBI:17368"/>
    </ligand>
</feature>
<feature type="binding site" evidence="1">
    <location>
        <position position="275"/>
    </location>
    <ligand>
        <name>hypoxanthine</name>
        <dbReference type="ChEBI" id="CHEBI:17368"/>
    </ligand>
</feature>
<accession>Q57PK6</accession>
<dbReference type="EMBL" id="AE017220">
    <property type="protein sequence ID" value="AAX65355.1"/>
    <property type="molecule type" value="Genomic_DNA"/>
</dbReference>
<dbReference type="RefSeq" id="WP_000190993.1">
    <property type="nucleotide sequence ID" value="NC_006905.1"/>
</dbReference>
<dbReference type="SMR" id="Q57PK6"/>
<dbReference type="KEGG" id="sec:SCH_1449"/>
<dbReference type="HOGENOM" id="CLU_037628_6_2_6"/>
<dbReference type="UniPathway" id="UPA00488"/>
<dbReference type="Proteomes" id="UP000000538">
    <property type="component" value="Chromosome"/>
</dbReference>
<dbReference type="GO" id="GO:0003700">
    <property type="term" value="F:DNA-binding transcription factor activity"/>
    <property type="evidence" value="ECO:0007669"/>
    <property type="project" value="TreeGrafter"/>
</dbReference>
<dbReference type="GO" id="GO:0000976">
    <property type="term" value="F:transcription cis-regulatory region binding"/>
    <property type="evidence" value="ECO:0007669"/>
    <property type="project" value="TreeGrafter"/>
</dbReference>
<dbReference type="GO" id="GO:0045892">
    <property type="term" value="P:negative regulation of DNA-templated transcription"/>
    <property type="evidence" value="ECO:0007669"/>
    <property type="project" value="UniProtKB-UniRule"/>
</dbReference>
<dbReference type="GO" id="GO:0006164">
    <property type="term" value="P:purine nucleotide biosynthetic process"/>
    <property type="evidence" value="ECO:0007669"/>
    <property type="project" value="UniProtKB-UniPathway"/>
</dbReference>
<dbReference type="CDD" id="cd01392">
    <property type="entry name" value="HTH_LacI"/>
    <property type="match status" value="1"/>
</dbReference>
<dbReference type="CDD" id="cd06275">
    <property type="entry name" value="PBP1_PurR"/>
    <property type="match status" value="1"/>
</dbReference>
<dbReference type="FunFam" id="1.10.260.40:FF:000002">
    <property type="entry name" value="HTH-type transcriptional repressor PurR"/>
    <property type="match status" value="1"/>
</dbReference>
<dbReference type="FunFam" id="3.40.50.2300:FF:000045">
    <property type="entry name" value="HTH-type transcriptional repressor PurR"/>
    <property type="match status" value="1"/>
</dbReference>
<dbReference type="Gene3D" id="3.40.50.2300">
    <property type="match status" value="2"/>
</dbReference>
<dbReference type="Gene3D" id="1.10.260.40">
    <property type="entry name" value="lambda repressor-like DNA-binding domains"/>
    <property type="match status" value="1"/>
</dbReference>
<dbReference type="HAMAP" id="MF_01277">
    <property type="entry name" value="HTH_type_PurR"/>
    <property type="match status" value="1"/>
</dbReference>
<dbReference type="InterPro" id="IPR000843">
    <property type="entry name" value="HTH_LacI"/>
</dbReference>
<dbReference type="InterPro" id="IPR046335">
    <property type="entry name" value="LacI/GalR-like_sensor"/>
</dbReference>
<dbReference type="InterPro" id="IPR010982">
    <property type="entry name" value="Lambda_DNA-bd_dom_sf"/>
</dbReference>
<dbReference type="InterPro" id="IPR028082">
    <property type="entry name" value="Peripla_BP_I"/>
</dbReference>
<dbReference type="InterPro" id="IPR023588">
    <property type="entry name" value="Tscrpt_reg_HTH_PurR"/>
</dbReference>
<dbReference type="NCBIfam" id="NF007979">
    <property type="entry name" value="PRK10703.1"/>
    <property type="match status" value="1"/>
</dbReference>
<dbReference type="PANTHER" id="PTHR30146:SF148">
    <property type="entry name" value="HTH-TYPE TRANSCRIPTIONAL REPRESSOR PURR-RELATED"/>
    <property type="match status" value="1"/>
</dbReference>
<dbReference type="PANTHER" id="PTHR30146">
    <property type="entry name" value="LACI-RELATED TRANSCRIPTIONAL REPRESSOR"/>
    <property type="match status" value="1"/>
</dbReference>
<dbReference type="Pfam" id="PF00356">
    <property type="entry name" value="LacI"/>
    <property type="match status" value="1"/>
</dbReference>
<dbReference type="Pfam" id="PF13377">
    <property type="entry name" value="Peripla_BP_3"/>
    <property type="match status" value="1"/>
</dbReference>
<dbReference type="PRINTS" id="PR00036">
    <property type="entry name" value="HTHLACI"/>
</dbReference>
<dbReference type="SMART" id="SM00354">
    <property type="entry name" value="HTH_LACI"/>
    <property type="match status" value="1"/>
</dbReference>
<dbReference type="SUPFAM" id="SSF47413">
    <property type="entry name" value="lambda repressor-like DNA-binding domains"/>
    <property type="match status" value="1"/>
</dbReference>
<dbReference type="SUPFAM" id="SSF53822">
    <property type="entry name" value="Periplasmic binding protein-like I"/>
    <property type="match status" value="1"/>
</dbReference>
<dbReference type="PROSITE" id="PS00356">
    <property type="entry name" value="HTH_LACI_1"/>
    <property type="match status" value="1"/>
</dbReference>
<dbReference type="PROSITE" id="PS50932">
    <property type="entry name" value="HTH_LACI_2"/>
    <property type="match status" value="1"/>
</dbReference>
<evidence type="ECO:0000255" key="1">
    <source>
        <dbReference type="HAMAP-Rule" id="MF_01277"/>
    </source>
</evidence>
<comment type="function">
    <text evidence="1">Is the main repressor of the genes involved in the de novo synthesis of purine nucleotides, regulating purB, purC, purEK, purF, purHD, purL, purMN and guaBA expression. PurR is allosterically activated to bind its cognate DNA by binding the purine corepressors, hypoxanthine or guanine, thereby effecting transcription repression.</text>
</comment>
<comment type="pathway">
    <text>Purine metabolism; purine nucleotide biosynthesis [regulation].</text>
</comment>
<comment type="subunit">
    <text evidence="1">Homodimer.</text>
</comment>
<comment type="domain">
    <text evidence="1">Consists of two structural and functional domains: an N-terminal DNA-binding domain, approximately the first 60 residues, and a larger C-terminal domain, approximately 280 residues, which imparts the function of corepressor binding and oligomerization.</text>
</comment>